<comment type="function">
    <text evidence="1">May have a role in chylomicrons and VLDL secretion and catabolism. Required for efficient activation of lipoprotein lipase by ApoC-II; potent activator of LCAT. Apoa-IV is a major component of HDL and chylomicrons (By similarity).</text>
</comment>
<comment type="subunit">
    <text evidence="2">Homodimer.</text>
</comment>
<comment type="subcellular location">
    <subcellularLocation>
        <location evidence="1">Secreted</location>
    </subcellularLocation>
</comment>
<comment type="tissue specificity">
    <text>Secreted in plasma.</text>
</comment>
<comment type="domain">
    <text evidence="1">Nine of the thirteen 22-amino acid tandem repeats (each 22-mer is actually a tandem array of two, A and B, related 11-mers) occurring in this sequence are predicted to be highly alpha-helical, and many of these helices are amphipathic. They may therefore serve as lipid-binding domains with lecithin:cholesterol acyltransferase (LCAT) activating abilities (By similarity).</text>
</comment>
<comment type="similarity">
    <text evidence="5">Belongs to the apolipoprotein A1/A4/E family.</text>
</comment>
<proteinExistence type="evidence at transcript level"/>
<accession>Q32PJ2</accession>
<name>APOA4_BOVIN</name>
<dbReference type="EMBL" id="BC108096">
    <property type="protein sequence ID" value="AAI08097.1"/>
    <property type="molecule type" value="mRNA"/>
</dbReference>
<dbReference type="RefSeq" id="NP_001032557.1">
    <property type="nucleotide sequence ID" value="NM_001037480.1"/>
</dbReference>
<dbReference type="SMR" id="Q32PJ2"/>
<dbReference type="FunCoup" id="Q32PJ2">
    <property type="interactions" value="316"/>
</dbReference>
<dbReference type="STRING" id="9913.ENSBTAP00000026345"/>
<dbReference type="PaxDb" id="9913-ENSBTAP00000026345"/>
<dbReference type="PeptideAtlas" id="Q32PJ2"/>
<dbReference type="GeneID" id="537301"/>
<dbReference type="KEGG" id="bta:537301"/>
<dbReference type="CTD" id="337"/>
<dbReference type="eggNOG" id="ENOG502QSC5">
    <property type="taxonomic scope" value="Eukaryota"/>
</dbReference>
<dbReference type="InParanoid" id="Q32PJ2"/>
<dbReference type="OrthoDB" id="9886755at2759"/>
<dbReference type="Proteomes" id="UP000009136">
    <property type="component" value="Unplaced"/>
</dbReference>
<dbReference type="GO" id="GO:0042627">
    <property type="term" value="C:chylomicron"/>
    <property type="evidence" value="ECO:0000318"/>
    <property type="project" value="GO_Central"/>
</dbReference>
<dbReference type="GO" id="GO:1903561">
    <property type="term" value="C:extracellular vesicle"/>
    <property type="evidence" value="ECO:0000318"/>
    <property type="project" value="GO_Central"/>
</dbReference>
<dbReference type="GO" id="GO:0034364">
    <property type="term" value="C:high-density lipoprotein particle"/>
    <property type="evidence" value="ECO:0000318"/>
    <property type="project" value="GO_Central"/>
</dbReference>
<dbReference type="GO" id="GO:0034362">
    <property type="term" value="C:low-density lipoprotein particle"/>
    <property type="evidence" value="ECO:0000318"/>
    <property type="project" value="GO_Central"/>
</dbReference>
<dbReference type="GO" id="GO:0034361">
    <property type="term" value="C:very-low-density lipoprotein particle"/>
    <property type="evidence" value="ECO:0000318"/>
    <property type="project" value="GO_Central"/>
</dbReference>
<dbReference type="GO" id="GO:0120020">
    <property type="term" value="F:cholesterol transfer activity"/>
    <property type="evidence" value="ECO:0000318"/>
    <property type="project" value="GO_Central"/>
</dbReference>
<dbReference type="GO" id="GO:0060228">
    <property type="term" value="F:phosphatidylcholine-sterol O-acyltransferase activator activity"/>
    <property type="evidence" value="ECO:0000318"/>
    <property type="project" value="GO_Central"/>
</dbReference>
<dbReference type="GO" id="GO:0005543">
    <property type="term" value="F:phospholipid binding"/>
    <property type="evidence" value="ECO:0000318"/>
    <property type="project" value="GO_Central"/>
</dbReference>
<dbReference type="GO" id="GO:0055090">
    <property type="term" value="P:acylglycerol homeostasis"/>
    <property type="evidence" value="ECO:0000318"/>
    <property type="project" value="GO_Central"/>
</dbReference>
<dbReference type="GO" id="GO:0033344">
    <property type="term" value="P:cholesterol efflux"/>
    <property type="evidence" value="ECO:0000318"/>
    <property type="project" value="GO_Central"/>
</dbReference>
<dbReference type="GO" id="GO:0008203">
    <property type="term" value="P:cholesterol metabolic process"/>
    <property type="evidence" value="ECO:0000318"/>
    <property type="project" value="GO_Central"/>
</dbReference>
<dbReference type="GO" id="GO:0042157">
    <property type="term" value="P:lipoprotein metabolic process"/>
    <property type="evidence" value="ECO:0007669"/>
    <property type="project" value="InterPro"/>
</dbReference>
<dbReference type="GO" id="GO:0033700">
    <property type="term" value="P:phospholipid efflux"/>
    <property type="evidence" value="ECO:0000318"/>
    <property type="project" value="GO_Central"/>
</dbReference>
<dbReference type="FunFam" id="1.20.120.20:FF:000004">
    <property type="entry name" value="Apolipoprotein A-IV"/>
    <property type="match status" value="1"/>
</dbReference>
<dbReference type="FunFam" id="1.20.120.20:FF:000005">
    <property type="entry name" value="Apolipoprotein A-IV"/>
    <property type="match status" value="1"/>
</dbReference>
<dbReference type="Gene3D" id="1.20.120.20">
    <property type="entry name" value="Apolipoprotein"/>
    <property type="match status" value="2"/>
</dbReference>
<dbReference type="InterPro" id="IPR000074">
    <property type="entry name" value="ApoA_E"/>
</dbReference>
<dbReference type="InterPro" id="IPR050163">
    <property type="entry name" value="Apolipoprotein_A1/A4/E"/>
</dbReference>
<dbReference type="PANTHER" id="PTHR18976">
    <property type="entry name" value="APOLIPOPROTEIN"/>
    <property type="match status" value="1"/>
</dbReference>
<dbReference type="PANTHER" id="PTHR18976:SF1">
    <property type="entry name" value="APOLIPOPROTEIN A-IV"/>
    <property type="match status" value="1"/>
</dbReference>
<dbReference type="Pfam" id="PF01442">
    <property type="entry name" value="Apolipoprotein"/>
    <property type="match status" value="1"/>
</dbReference>
<dbReference type="SUPFAM" id="SSF58113">
    <property type="entry name" value="Apolipoprotein A-I"/>
    <property type="match status" value="2"/>
</dbReference>
<evidence type="ECO:0000250" key="1"/>
<evidence type="ECO:0000250" key="2">
    <source>
        <dbReference type="UniProtKB" id="P06727"/>
    </source>
</evidence>
<evidence type="ECO:0000255" key="3"/>
<evidence type="ECO:0000256" key="4">
    <source>
        <dbReference type="SAM" id="MobiDB-lite"/>
    </source>
</evidence>
<evidence type="ECO:0000305" key="5"/>
<organism>
    <name type="scientific">Bos taurus</name>
    <name type="common">Bovine</name>
    <dbReference type="NCBI Taxonomy" id="9913"/>
    <lineage>
        <taxon>Eukaryota</taxon>
        <taxon>Metazoa</taxon>
        <taxon>Chordata</taxon>
        <taxon>Craniata</taxon>
        <taxon>Vertebrata</taxon>
        <taxon>Euteleostomi</taxon>
        <taxon>Mammalia</taxon>
        <taxon>Eutheria</taxon>
        <taxon>Laurasiatheria</taxon>
        <taxon>Artiodactyla</taxon>
        <taxon>Ruminantia</taxon>
        <taxon>Pecora</taxon>
        <taxon>Bovidae</taxon>
        <taxon>Bovinae</taxon>
        <taxon>Bos</taxon>
    </lineage>
</organism>
<feature type="signal peptide" evidence="3">
    <location>
        <begin position="1"/>
        <end position="20"/>
    </location>
</feature>
<feature type="chain" id="PRO_0000259419" description="Apolipoprotein A-IV">
    <location>
        <begin position="21"/>
        <end position="380"/>
    </location>
</feature>
<feature type="repeat" description="1">
    <location>
        <begin position="33"/>
        <end position="54"/>
    </location>
</feature>
<feature type="repeat" description="2">
    <location>
        <begin position="60"/>
        <end position="81"/>
    </location>
</feature>
<feature type="repeat" description="3">
    <location>
        <begin position="82"/>
        <end position="103"/>
    </location>
</feature>
<feature type="repeat" description="4">
    <location>
        <begin position="115"/>
        <end position="136"/>
    </location>
</feature>
<feature type="repeat" description="5">
    <location>
        <begin position="137"/>
        <end position="158"/>
    </location>
</feature>
<feature type="repeat" description="6">
    <location>
        <begin position="159"/>
        <end position="180"/>
    </location>
</feature>
<feature type="repeat" description="7">
    <location>
        <begin position="181"/>
        <end position="202"/>
    </location>
</feature>
<feature type="repeat" description="8">
    <location>
        <begin position="203"/>
        <end position="224"/>
    </location>
</feature>
<feature type="repeat" description="9">
    <location>
        <begin position="225"/>
        <end position="246"/>
    </location>
</feature>
<feature type="repeat" description="10">
    <location>
        <begin position="247"/>
        <end position="268"/>
    </location>
</feature>
<feature type="repeat" description="11">
    <location>
        <begin position="269"/>
        <end position="286"/>
    </location>
</feature>
<feature type="repeat" description="12">
    <location>
        <begin position="287"/>
        <end position="308"/>
    </location>
</feature>
<feature type="repeat" description="13">
    <location>
        <begin position="309"/>
        <end position="330"/>
    </location>
</feature>
<feature type="region of interest" description="13 X 22 AA approximate tandem repeats">
    <location>
        <begin position="33"/>
        <end position="330"/>
    </location>
</feature>
<feature type="region of interest" description="Disordered" evidence="4">
    <location>
        <begin position="361"/>
        <end position="380"/>
    </location>
</feature>
<gene>
    <name type="primary">APOA4</name>
</gene>
<reference key="1">
    <citation type="submission" date="2005-10" db="EMBL/GenBank/DDBJ databases">
        <authorList>
            <consortium name="NIH - Mammalian Gene Collection (MGC) project"/>
        </authorList>
    </citation>
    <scope>NUCLEOTIDE SEQUENCE [LARGE SCALE MRNA]</scope>
    <source>
        <strain>Crossbred X Angus</strain>
        <tissue>Ileum</tissue>
    </source>
</reference>
<keyword id="KW-0162">Chylomicron</keyword>
<keyword id="KW-0345">HDL</keyword>
<keyword id="KW-0445">Lipid transport</keyword>
<keyword id="KW-1185">Reference proteome</keyword>
<keyword id="KW-0677">Repeat</keyword>
<keyword id="KW-0964">Secreted</keyword>
<keyword id="KW-0732">Signal</keyword>
<keyword id="KW-0813">Transport</keyword>
<sequence length="380" mass="43018">MFLKAVVLSLALVAVTGAEAEVNADQVATVIWDYFSQLGNNAKKAVEHIQKSELTQQLNTLFQDKLGEVSTYTDDLQKKLVPFATELHERLTKDSEKLKEEIRKELEDLRARLLPHATEVSQKIGDNVRELQQRLGPYAEELRTQVDTQAQQLRRQLTPYVERMEKVMRQNLDQLQASLAPYAEELQATVNQRVEELKGRLTPYADQLQTKIEENVEELRRSLAPYAQDVQGKLNHQLEGLAFQMKKHAEELKAKISAKAEELRQGLVPLVNSVHGSQLGNAEDLQKSLAELSSRLDQQVEDFRRTVGPYGETFNKAMVQQLDTLRQKLGPLAGDVEDHLSFLEKDLRDKVSSFFNTLKEKESQAPALPAQEEMPVPLGG</sequence>
<protein>
    <recommendedName>
        <fullName>Apolipoprotein A-IV</fullName>
        <shortName>Apo-AIV</shortName>
        <shortName>ApoA-IV</shortName>
    </recommendedName>
    <alternativeName>
        <fullName>Apolipoprotein A4</fullName>
    </alternativeName>
</protein>